<reference evidence="4" key="1">
    <citation type="journal article" date="2009" name="BMC Evol. Biol.">
        <title>A proteomic approach for studying insect phylogeny: CAPA peptides of ancient insect taxa (Dictyoptera, Blattoptera) as a test case.</title>
        <authorList>
            <person name="Roth S."/>
            <person name="Fromm B."/>
            <person name="Gaede G."/>
            <person name="Predel R."/>
        </authorList>
    </citation>
    <scope>PROTEIN SEQUENCE</scope>
    <scope>AMIDATION AT THR-11</scope>
    <source>
        <tissue evidence="2">Abdominal perisympathetic organs</tissue>
    </source>
</reference>
<name>PVK1_GYNLU</name>
<comment type="function">
    <text evidence="4">Mediates visceral muscle contractile activity (myotropic activity).</text>
</comment>
<comment type="subcellular location">
    <subcellularLocation>
        <location evidence="4">Secreted</location>
    </subcellularLocation>
</comment>
<comment type="similarity">
    <text evidence="1">Belongs to the periviscerokinin family.</text>
</comment>
<protein>
    <recommendedName>
        <fullName evidence="3">Periviscerokinin-1</fullName>
        <shortName evidence="3">GynLu-PVK-1</shortName>
    </recommendedName>
</protein>
<proteinExistence type="evidence at protein level"/>
<organism>
    <name type="scientific">Gyna lurida</name>
    <name type="common">Porcelain cockroach</name>
    <dbReference type="NCBI Taxonomy" id="406578"/>
    <lineage>
        <taxon>Eukaryota</taxon>
        <taxon>Metazoa</taxon>
        <taxon>Ecdysozoa</taxon>
        <taxon>Arthropoda</taxon>
        <taxon>Hexapoda</taxon>
        <taxon>Insecta</taxon>
        <taxon>Pterygota</taxon>
        <taxon>Neoptera</taxon>
        <taxon>Polyneoptera</taxon>
        <taxon>Dictyoptera</taxon>
        <taxon>Blattodea</taxon>
        <taxon>Blaberoidea</taxon>
        <taxon>Blaberidae</taxon>
        <taxon>Gyninae</taxon>
        <taxon>Gyna</taxon>
    </lineage>
</organism>
<keyword id="KW-0027">Amidation</keyword>
<keyword id="KW-0903">Direct protein sequencing</keyword>
<keyword id="KW-0527">Neuropeptide</keyword>
<keyword id="KW-0964">Secreted</keyword>
<evidence type="ECO:0000255" key="1"/>
<evidence type="ECO:0000269" key="2">
    <source>
    </source>
</evidence>
<evidence type="ECO:0000303" key="3">
    <source>
    </source>
</evidence>
<evidence type="ECO:0000305" key="4"/>
<feature type="peptide" id="PRO_0000378746" description="Periviscerokinin-1" evidence="2">
    <location>
        <begin position="1"/>
        <end position="11"/>
    </location>
</feature>
<feature type="modified residue" description="Threonine amide" evidence="2">
    <location>
        <position position="11"/>
    </location>
</feature>
<dbReference type="GO" id="GO:0005576">
    <property type="term" value="C:extracellular region"/>
    <property type="evidence" value="ECO:0007669"/>
    <property type="project" value="UniProtKB-SubCell"/>
</dbReference>
<dbReference type="GO" id="GO:0007218">
    <property type="term" value="P:neuropeptide signaling pathway"/>
    <property type="evidence" value="ECO:0007669"/>
    <property type="project" value="UniProtKB-KW"/>
</dbReference>
<dbReference type="InterPro" id="IPR013231">
    <property type="entry name" value="Periviscerokinin"/>
</dbReference>
<dbReference type="Pfam" id="PF08259">
    <property type="entry name" value="Periviscerokin"/>
    <property type="match status" value="1"/>
</dbReference>
<accession>P85647</accession>
<sequence length="11" mass="1105">GSTGLIPFGRT</sequence>